<protein>
    <recommendedName>
        <fullName evidence="1">UDP-N-acetylmuramoylalanine--D-glutamate ligase</fullName>
        <ecNumber evidence="1">6.3.2.9</ecNumber>
    </recommendedName>
    <alternativeName>
        <fullName evidence="1">D-glutamic acid-adding enzyme</fullName>
    </alternativeName>
    <alternativeName>
        <fullName evidence="1">UDP-N-acetylmuramoyl-L-alanyl-D-glutamate synthetase</fullName>
    </alternativeName>
</protein>
<gene>
    <name evidence="1" type="primary">murD</name>
    <name type="ordered locus">PSPPH_4110</name>
</gene>
<reference key="1">
    <citation type="journal article" date="2005" name="J. Bacteriol.">
        <title>Whole-genome sequence analysis of Pseudomonas syringae pv. phaseolicola 1448A reveals divergence among pathovars in genes involved in virulence and transposition.</title>
        <authorList>
            <person name="Joardar V."/>
            <person name="Lindeberg M."/>
            <person name="Jackson R.W."/>
            <person name="Selengut J."/>
            <person name="Dodson R."/>
            <person name="Brinkac L.M."/>
            <person name="Daugherty S.C."/>
            <person name="DeBoy R.T."/>
            <person name="Durkin A.S."/>
            <person name="Gwinn Giglio M."/>
            <person name="Madupu R."/>
            <person name="Nelson W.C."/>
            <person name="Rosovitz M.J."/>
            <person name="Sullivan S.A."/>
            <person name="Crabtree J."/>
            <person name="Creasy T."/>
            <person name="Davidsen T.M."/>
            <person name="Haft D.H."/>
            <person name="Zafar N."/>
            <person name="Zhou L."/>
            <person name="Halpin R."/>
            <person name="Holley T."/>
            <person name="Khouri H.M."/>
            <person name="Feldblyum T.V."/>
            <person name="White O."/>
            <person name="Fraser C.M."/>
            <person name="Chatterjee A.K."/>
            <person name="Cartinhour S."/>
            <person name="Schneider D."/>
            <person name="Mansfield J.W."/>
            <person name="Collmer A."/>
            <person name="Buell R."/>
        </authorList>
    </citation>
    <scope>NUCLEOTIDE SEQUENCE [LARGE SCALE GENOMIC DNA]</scope>
    <source>
        <strain>1448A / Race 6</strain>
    </source>
</reference>
<dbReference type="EC" id="6.3.2.9" evidence="1"/>
<dbReference type="EMBL" id="CP000058">
    <property type="protein sequence ID" value="AAZ34153.1"/>
    <property type="molecule type" value="Genomic_DNA"/>
</dbReference>
<dbReference type="RefSeq" id="WP_004656523.1">
    <property type="nucleotide sequence ID" value="NC_005773.3"/>
</dbReference>
<dbReference type="SMR" id="Q48EF6"/>
<dbReference type="KEGG" id="psp:PSPPH_4110"/>
<dbReference type="eggNOG" id="COG0771">
    <property type="taxonomic scope" value="Bacteria"/>
</dbReference>
<dbReference type="HOGENOM" id="CLU_032540_1_0_6"/>
<dbReference type="UniPathway" id="UPA00219"/>
<dbReference type="Proteomes" id="UP000000551">
    <property type="component" value="Chromosome"/>
</dbReference>
<dbReference type="GO" id="GO:0005737">
    <property type="term" value="C:cytoplasm"/>
    <property type="evidence" value="ECO:0007669"/>
    <property type="project" value="UniProtKB-SubCell"/>
</dbReference>
<dbReference type="GO" id="GO:0005524">
    <property type="term" value="F:ATP binding"/>
    <property type="evidence" value="ECO:0007669"/>
    <property type="project" value="UniProtKB-UniRule"/>
</dbReference>
<dbReference type="GO" id="GO:0008764">
    <property type="term" value="F:UDP-N-acetylmuramoylalanine-D-glutamate ligase activity"/>
    <property type="evidence" value="ECO:0007669"/>
    <property type="project" value="UniProtKB-UniRule"/>
</dbReference>
<dbReference type="GO" id="GO:0051301">
    <property type="term" value="P:cell division"/>
    <property type="evidence" value="ECO:0007669"/>
    <property type="project" value="UniProtKB-KW"/>
</dbReference>
<dbReference type="GO" id="GO:0071555">
    <property type="term" value="P:cell wall organization"/>
    <property type="evidence" value="ECO:0007669"/>
    <property type="project" value="UniProtKB-KW"/>
</dbReference>
<dbReference type="GO" id="GO:0009252">
    <property type="term" value="P:peptidoglycan biosynthetic process"/>
    <property type="evidence" value="ECO:0007669"/>
    <property type="project" value="UniProtKB-UniRule"/>
</dbReference>
<dbReference type="GO" id="GO:0008360">
    <property type="term" value="P:regulation of cell shape"/>
    <property type="evidence" value="ECO:0007669"/>
    <property type="project" value="UniProtKB-KW"/>
</dbReference>
<dbReference type="Gene3D" id="3.90.190.20">
    <property type="entry name" value="Mur ligase, C-terminal domain"/>
    <property type="match status" value="1"/>
</dbReference>
<dbReference type="Gene3D" id="3.40.1190.10">
    <property type="entry name" value="Mur-like, catalytic domain"/>
    <property type="match status" value="1"/>
</dbReference>
<dbReference type="Gene3D" id="3.40.50.720">
    <property type="entry name" value="NAD(P)-binding Rossmann-like Domain"/>
    <property type="match status" value="1"/>
</dbReference>
<dbReference type="HAMAP" id="MF_00639">
    <property type="entry name" value="MurD"/>
    <property type="match status" value="1"/>
</dbReference>
<dbReference type="InterPro" id="IPR036565">
    <property type="entry name" value="Mur-like_cat_sf"/>
</dbReference>
<dbReference type="InterPro" id="IPR004101">
    <property type="entry name" value="Mur_ligase_C"/>
</dbReference>
<dbReference type="InterPro" id="IPR036615">
    <property type="entry name" value="Mur_ligase_C_dom_sf"/>
</dbReference>
<dbReference type="InterPro" id="IPR013221">
    <property type="entry name" value="Mur_ligase_cen"/>
</dbReference>
<dbReference type="InterPro" id="IPR005762">
    <property type="entry name" value="MurD"/>
</dbReference>
<dbReference type="NCBIfam" id="TIGR01087">
    <property type="entry name" value="murD"/>
    <property type="match status" value="1"/>
</dbReference>
<dbReference type="PANTHER" id="PTHR43692">
    <property type="entry name" value="UDP-N-ACETYLMURAMOYLALANINE--D-GLUTAMATE LIGASE"/>
    <property type="match status" value="1"/>
</dbReference>
<dbReference type="PANTHER" id="PTHR43692:SF1">
    <property type="entry name" value="UDP-N-ACETYLMURAMOYLALANINE--D-GLUTAMATE LIGASE"/>
    <property type="match status" value="1"/>
</dbReference>
<dbReference type="Pfam" id="PF02875">
    <property type="entry name" value="Mur_ligase_C"/>
    <property type="match status" value="1"/>
</dbReference>
<dbReference type="Pfam" id="PF08245">
    <property type="entry name" value="Mur_ligase_M"/>
    <property type="match status" value="1"/>
</dbReference>
<dbReference type="Pfam" id="PF21799">
    <property type="entry name" value="MurD-like_N"/>
    <property type="match status" value="1"/>
</dbReference>
<dbReference type="SUPFAM" id="SSF51984">
    <property type="entry name" value="MurCD N-terminal domain"/>
    <property type="match status" value="1"/>
</dbReference>
<dbReference type="SUPFAM" id="SSF53623">
    <property type="entry name" value="MurD-like peptide ligases, catalytic domain"/>
    <property type="match status" value="1"/>
</dbReference>
<dbReference type="SUPFAM" id="SSF53244">
    <property type="entry name" value="MurD-like peptide ligases, peptide-binding domain"/>
    <property type="match status" value="1"/>
</dbReference>
<sequence>MSLIVSDRFRIVVGLGKSGMSLVRFLANRGVSFAVADTRENPPELATLRRDYPQVEVRCGELDVDFLCRADELYVSPGLALATPALQQAHARGVKLSGDIELFARYAKAPVIAITGSNAKSTVTTLVGEMAVAAGKRVAVGGNLGTPALDLLSDDVELYVMELSSFQLETTDQLNAEVATVLNISEDHMDRYSGLPAYHLAKHRIFRGARQVVVNRQDALSRPLIGEGLPCWTFGLNKPDFHGFGLLEENGEKYLAFQFENLMPVRELKVRGAHNQANALAALALGHAVGLPFDAMLASLREFTGLEHRCQWLREHDGVHYYNDSKATNVGAALAAIEGLGSDIDGKLVLIAGGDGKGADFSALRAPVAEHCRAAVLLGRDAELIAQALGDAVTLVRVDTVQAAVEQSARLAQRGDAVLLSPACASLDMFKNYEERGRVFAQAVECLS</sequence>
<name>MURD_PSE14</name>
<feature type="chain" id="PRO_0000257218" description="UDP-N-acetylmuramoylalanine--D-glutamate ligase">
    <location>
        <begin position="1"/>
        <end position="448"/>
    </location>
</feature>
<feature type="binding site" evidence="1">
    <location>
        <begin position="116"/>
        <end position="122"/>
    </location>
    <ligand>
        <name>ATP</name>
        <dbReference type="ChEBI" id="CHEBI:30616"/>
    </ligand>
</feature>
<proteinExistence type="inferred from homology"/>
<evidence type="ECO:0000255" key="1">
    <source>
        <dbReference type="HAMAP-Rule" id="MF_00639"/>
    </source>
</evidence>
<organism>
    <name type="scientific">Pseudomonas savastanoi pv. phaseolicola (strain 1448A / Race 6)</name>
    <name type="common">Pseudomonas syringae pv. phaseolicola (strain 1448A / Race 6)</name>
    <dbReference type="NCBI Taxonomy" id="264730"/>
    <lineage>
        <taxon>Bacteria</taxon>
        <taxon>Pseudomonadati</taxon>
        <taxon>Pseudomonadota</taxon>
        <taxon>Gammaproteobacteria</taxon>
        <taxon>Pseudomonadales</taxon>
        <taxon>Pseudomonadaceae</taxon>
        <taxon>Pseudomonas</taxon>
    </lineage>
</organism>
<accession>Q48EF6</accession>
<keyword id="KW-0067">ATP-binding</keyword>
<keyword id="KW-0131">Cell cycle</keyword>
<keyword id="KW-0132">Cell division</keyword>
<keyword id="KW-0133">Cell shape</keyword>
<keyword id="KW-0961">Cell wall biogenesis/degradation</keyword>
<keyword id="KW-0963">Cytoplasm</keyword>
<keyword id="KW-0436">Ligase</keyword>
<keyword id="KW-0547">Nucleotide-binding</keyword>
<keyword id="KW-0573">Peptidoglycan synthesis</keyword>
<comment type="function">
    <text evidence="1">Cell wall formation. Catalyzes the addition of glutamate to the nucleotide precursor UDP-N-acetylmuramoyl-L-alanine (UMA).</text>
</comment>
<comment type="catalytic activity">
    <reaction evidence="1">
        <text>UDP-N-acetyl-alpha-D-muramoyl-L-alanine + D-glutamate + ATP = UDP-N-acetyl-alpha-D-muramoyl-L-alanyl-D-glutamate + ADP + phosphate + H(+)</text>
        <dbReference type="Rhea" id="RHEA:16429"/>
        <dbReference type="ChEBI" id="CHEBI:15378"/>
        <dbReference type="ChEBI" id="CHEBI:29986"/>
        <dbReference type="ChEBI" id="CHEBI:30616"/>
        <dbReference type="ChEBI" id="CHEBI:43474"/>
        <dbReference type="ChEBI" id="CHEBI:83898"/>
        <dbReference type="ChEBI" id="CHEBI:83900"/>
        <dbReference type="ChEBI" id="CHEBI:456216"/>
        <dbReference type="EC" id="6.3.2.9"/>
    </reaction>
</comment>
<comment type="pathway">
    <text evidence="1">Cell wall biogenesis; peptidoglycan biosynthesis.</text>
</comment>
<comment type="subcellular location">
    <subcellularLocation>
        <location evidence="1">Cytoplasm</location>
    </subcellularLocation>
</comment>
<comment type="similarity">
    <text evidence="1">Belongs to the MurCDEF family.</text>
</comment>